<feature type="chain" id="PRO_0000387286" description="Probable inorganic carbon transporter subunit DabA">
    <location>
        <begin position="1"/>
        <end position="815"/>
    </location>
</feature>
<feature type="binding site" evidence="1">
    <location>
        <position position="334"/>
    </location>
    <ligand>
        <name>Zn(2+)</name>
        <dbReference type="ChEBI" id="CHEBI:29105"/>
    </ligand>
</feature>
<feature type="binding site" evidence="1">
    <location>
        <position position="336"/>
    </location>
    <ligand>
        <name>Zn(2+)</name>
        <dbReference type="ChEBI" id="CHEBI:29105"/>
    </ligand>
</feature>
<feature type="binding site" evidence="1">
    <location>
        <position position="507"/>
    </location>
    <ligand>
        <name>Zn(2+)</name>
        <dbReference type="ChEBI" id="CHEBI:29105"/>
    </ligand>
</feature>
<feature type="binding site" evidence="1">
    <location>
        <position position="522"/>
    </location>
    <ligand>
        <name>Zn(2+)</name>
        <dbReference type="ChEBI" id="CHEBI:29105"/>
    </ligand>
</feature>
<comment type="function">
    <text evidence="1">Part of an energy-coupled inorganic carbon pump.</text>
</comment>
<comment type="cofactor">
    <cofactor evidence="1">
        <name>Zn(2+)</name>
        <dbReference type="ChEBI" id="CHEBI:29105"/>
    </cofactor>
</comment>
<comment type="subunit">
    <text evidence="1">Forms a complex with DabB.</text>
</comment>
<comment type="subcellular location">
    <subcellularLocation>
        <location evidence="1">Cell inner membrane</location>
        <topology evidence="1">Peripheral membrane protein</topology>
    </subcellularLocation>
</comment>
<comment type="similarity">
    <text evidence="1">Belongs to the inorganic carbon transporter (TC 9.A.2) DabA family.</text>
</comment>
<sequence>MTALEHFVAIDRDLLHAAARRACERIAPTWPLDRMIAVSPLWERRDQAWQEVAEQLWRRAGSRLTLDAQAYRQALQEGHLDDRHLQQALDEAGSSWTPAQLLHLLPAQDAEACGLPLLEDMADAEIALPGWPTLITQQIGQCCAAWFDEAQADWRPDRSEGLYQAWRAAMLQDRGLSVLSACAELRQRIGELPMQPQAALEVAVQRLGLAADELDEWFDCLLLRSLGWASWCAYRRWQARLQGDDDDSLRQLLAIRAAWEWLVDDRLRHAGSRWSNWREAWQAARSRVPAAGWQALMLCQRAEELAWQEQLQQGLRRPQAVPAQAPELARVYFCIDVRSEPLRRALEQACPQVRTGGFAGFFGLPIAYTPLGTAATRPQLPGLLAAQLAVSDSSGDSQRDRVLAERRQKRLARKERWQLFERLPASSFTLIESTGLGYAGALLGRTCGLLQGAGAAHRAAWRAAEWRALKPALAPLALTERVQLAARVLRAMSLTRDFPPLILLLGHGSQSANNPQAAGLDCGACCGQSGEVNARLLADLLNDAGVRQGLAEEGIELPDACRVLAGLHNTSTDEVQVFIDALLSAELHSAWQQLRAALDAAGAEVRRQRAARLGLQPVAERPQRLLAALRRRVGDWAQTRPEWGLAGNAGFIAAPRERTRGVDLQGRVFLHDYDWRQDEDGKVLELIMTAPMVVAHWINLQYLTSTTDNRRFGSGNKVLHNVVGGHIGVFEGNGGDLRIGLARQSLHDGERWVHRPLRLSVVLAAPQAMIERVIAAHQVVRDLVEHGWLHLLRLDDDASMPLERRGEAGWQKLAG</sequence>
<dbReference type="EMBL" id="CP000680">
    <property type="protein sequence ID" value="ABP84781.1"/>
    <property type="molecule type" value="Genomic_DNA"/>
</dbReference>
<dbReference type="STRING" id="399739.Pmen_2020"/>
<dbReference type="KEGG" id="pmy:Pmen_2020"/>
<dbReference type="PATRIC" id="fig|399739.8.peg.2047"/>
<dbReference type="eggNOG" id="COG3002">
    <property type="taxonomic scope" value="Bacteria"/>
</dbReference>
<dbReference type="HOGENOM" id="CLU_009885_1_0_6"/>
<dbReference type="OrthoDB" id="9805101at2"/>
<dbReference type="GO" id="GO:0005886">
    <property type="term" value="C:plasma membrane"/>
    <property type="evidence" value="ECO:0007669"/>
    <property type="project" value="UniProtKB-SubCell"/>
</dbReference>
<dbReference type="GO" id="GO:0008270">
    <property type="term" value="F:zinc ion binding"/>
    <property type="evidence" value="ECO:0007669"/>
    <property type="project" value="UniProtKB-UniRule"/>
</dbReference>
<dbReference type="HAMAP" id="MF_01871">
    <property type="entry name" value="DabA"/>
    <property type="match status" value="1"/>
</dbReference>
<dbReference type="InterPro" id="IPR018752">
    <property type="entry name" value="DabA"/>
</dbReference>
<dbReference type="PANTHER" id="PTHR38344:SF1">
    <property type="entry name" value="INORGANIC CARBON TRANSPORTER SUBUNIT DABA-RELATED"/>
    <property type="match status" value="1"/>
</dbReference>
<dbReference type="PANTHER" id="PTHR38344">
    <property type="entry name" value="UPF0753 PROTEIN AQ_863"/>
    <property type="match status" value="1"/>
</dbReference>
<dbReference type="Pfam" id="PF10070">
    <property type="entry name" value="DabA"/>
    <property type="match status" value="1"/>
</dbReference>
<proteinExistence type="inferred from homology"/>
<evidence type="ECO:0000255" key="1">
    <source>
        <dbReference type="HAMAP-Rule" id="MF_01871"/>
    </source>
</evidence>
<organism>
    <name type="scientific">Ectopseudomonas mendocina (strain ymp)</name>
    <name type="common">Pseudomonas mendocina</name>
    <dbReference type="NCBI Taxonomy" id="399739"/>
    <lineage>
        <taxon>Bacteria</taxon>
        <taxon>Pseudomonadati</taxon>
        <taxon>Pseudomonadota</taxon>
        <taxon>Gammaproteobacteria</taxon>
        <taxon>Pseudomonadales</taxon>
        <taxon>Pseudomonadaceae</taxon>
        <taxon>Ectopseudomonas</taxon>
    </lineage>
</organism>
<keyword id="KW-0997">Cell inner membrane</keyword>
<keyword id="KW-1003">Cell membrane</keyword>
<keyword id="KW-0472">Membrane</keyword>
<keyword id="KW-0479">Metal-binding</keyword>
<keyword id="KW-0813">Transport</keyword>
<keyword id="KW-0862">Zinc</keyword>
<protein>
    <recommendedName>
        <fullName evidence="1">Probable inorganic carbon transporter subunit DabA</fullName>
    </recommendedName>
</protein>
<accession>A4XTW5</accession>
<reference key="1">
    <citation type="submission" date="2007-04" db="EMBL/GenBank/DDBJ databases">
        <title>Complete sequence of Pseudomonas mendocina ymp.</title>
        <authorList>
            <consortium name="US DOE Joint Genome Institute"/>
            <person name="Copeland A."/>
            <person name="Lucas S."/>
            <person name="Lapidus A."/>
            <person name="Barry K."/>
            <person name="Glavina del Rio T."/>
            <person name="Dalin E."/>
            <person name="Tice H."/>
            <person name="Pitluck S."/>
            <person name="Kiss H."/>
            <person name="Brettin T."/>
            <person name="Detter J.C."/>
            <person name="Bruce D."/>
            <person name="Han C."/>
            <person name="Schmutz J."/>
            <person name="Larimer F."/>
            <person name="Land M."/>
            <person name="Hauser L."/>
            <person name="Kyrpides N."/>
            <person name="Mikhailova N."/>
            <person name="Hersman L."/>
            <person name="Dubois J."/>
            <person name="Maurice P."/>
            <person name="Richardson P."/>
        </authorList>
    </citation>
    <scope>NUCLEOTIDE SEQUENCE [LARGE SCALE GENOMIC DNA]</scope>
    <source>
        <strain>ymp</strain>
    </source>
</reference>
<gene>
    <name evidence="1" type="primary">dabA</name>
    <name type="ordered locus">Pmen_2020</name>
</gene>
<name>DABA_ECTM1</name>